<protein>
    <recommendedName>
        <fullName evidence="1">NAD(P)H-quinone oxidoreductase subunit I, chloroplastic</fullName>
        <ecNumber evidence="1">7.1.1.-</ecNumber>
    </recommendedName>
    <alternativeName>
        <fullName evidence="1">NAD(P)H dehydrogenase subunit I</fullName>
        <shortName evidence="1">NDH subunit I</shortName>
    </alternativeName>
    <alternativeName>
        <fullName evidence="1">NADH-plastoquinone oxidoreductase subunit I</fullName>
    </alternativeName>
</protein>
<comment type="function">
    <text evidence="1">NDH shuttles electrons from NAD(P)H:plastoquinone, via FMN and iron-sulfur (Fe-S) centers, to quinones in the photosynthetic chain and possibly in a chloroplast respiratory chain. The immediate electron acceptor for the enzyme in this species is believed to be plastoquinone. Couples the redox reaction to proton translocation, and thus conserves the redox energy in a proton gradient.</text>
</comment>
<comment type="catalytic activity">
    <reaction evidence="1">
        <text>a plastoquinone + NADH + (n+1) H(+)(in) = a plastoquinol + NAD(+) + n H(+)(out)</text>
        <dbReference type="Rhea" id="RHEA:42608"/>
        <dbReference type="Rhea" id="RHEA-COMP:9561"/>
        <dbReference type="Rhea" id="RHEA-COMP:9562"/>
        <dbReference type="ChEBI" id="CHEBI:15378"/>
        <dbReference type="ChEBI" id="CHEBI:17757"/>
        <dbReference type="ChEBI" id="CHEBI:57540"/>
        <dbReference type="ChEBI" id="CHEBI:57945"/>
        <dbReference type="ChEBI" id="CHEBI:62192"/>
    </reaction>
</comment>
<comment type="catalytic activity">
    <reaction evidence="1">
        <text>a plastoquinone + NADPH + (n+1) H(+)(in) = a plastoquinol + NADP(+) + n H(+)(out)</text>
        <dbReference type="Rhea" id="RHEA:42612"/>
        <dbReference type="Rhea" id="RHEA-COMP:9561"/>
        <dbReference type="Rhea" id="RHEA-COMP:9562"/>
        <dbReference type="ChEBI" id="CHEBI:15378"/>
        <dbReference type="ChEBI" id="CHEBI:17757"/>
        <dbReference type="ChEBI" id="CHEBI:57783"/>
        <dbReference type="ChEBI" id="CHEBI:58349"/>
        <dbReference type="ChEBI" id="CHEBI:62192"/>
    </reaction>
</comment>
<comment type="cofactor">
    <cofactor evidence="1">
        <name>[4Fe-4S] cluster</name>
        <dbReference type="ChEBI" id="CHEBI:49883"/>
    </cofactor>
    <text evidence="1">Binds 2 [4Fe-4S] clusters per subunit.</text>
</comment>
<comment type="subunit">
    <text evidence="1">NDH is composed of at least 16 different subunits, 5 of which are encoded in the nucleus.</text>
</comment>
<comment type="subcellular location">
    <subcellularLocation>
        <location evidence="1">Plastid</location>
        <location evidence="1">Chloroplast thylakoid membrane</location>
        <topology evidence="1">Peripheral membrane protein</topology>
    </subcellularLocation>
</comment>
<comment type="similarity">
    <text evidence="1">Belongs to the complex I 23 kDa subunit family.</text>
</comment>
<accession>Q9BBP0</accession>
<name>NDHI_LOTJA</name>
<feature type="chain" id="PRO_0000118705" description="NAD(P)H-quinone oxidoreductase subunit I, chloroplastic">
    <location>
        <begin position="1"/>
        <end position="161"/>
    </location>
</feature>
<feature type="domain" description="4Fe-4S ferredoxin-type 1" evidence="1">
    <location>
        <begin position="55"/>
        <end position="84"/>
    </location>
</feature>
<feature type="domain" description="4Fe-4S ferredoxin-type 2" evidence="1">
    <location>
        <begin position="95"/>
        <end position="124"/>
    </location>
</feature>
<feature type="binding site" evidence="1">
    <location>
        <position position="64"/>
    </location>
    <ligand>
        <name>[4Fe-4S] cluster</name>
        <dbReference type="ChEBI" id="CHEBI:49883"/>
        <label>1</label>
    </ligand>
</feature>
<feature type="binding site" evidence="1">
    <location>
        <position position="67"/>
    </location>
    <ligand>
        <name>[4Fe-4S] cluster</name>
        <dbReference type="ChEBI" id="CHEBI:49883"/>
        <label>1</label>
    </ligand>
</feature>
<feature type="binding site" evidence="1">
    <location>
        <position position="70"/>
    </location>
    <ligand>
        <name>[4Fe-4S] cluster</name>
        <dbReference type="ChEBI" id="CHEBI:49883"/>
        <label>1</label>
    </ligand>
</feature>
<feature type="binding site" evidence="1">
    <location>
        <position position="74"/>
    </location>
    <ligand>
        <name>[4Fe-4S] cluster</name>
        <dbReference type="ChEBI" id="CHEBI:49883"/>
        <label>2</label>
    </ligand>
</feature>
<feature type="binding site" evidence="1">
    <location>
        <position position="104"/>
    </location>
    <ligand>
        <name>[4Fe-4S] cluster</name>
        <dbReference type="ChEBI" id="CHEBI:49883"/>
        <label>2</label>
    </ligand>
</feature>
<feature type="binding site" evidence="1">
    <location>
        <position position="107"/>
    </location>
    <ligand>
        <name>[4Fe-4S] cluster</name>
        <dbReference type="ChEBI" id="CHEBI:49883"/>
        <label>2</label>
    </ligand>
</feature>
<feature type="binding site" evidence="1">
    <location>
        <position position="110"/>
    </location>
    <ligand>
        <name>[4Fe-4S] cluster</name>
        <dbReference type="ChEBI" id="CHEBI:49883"/>
        <label>2</label>
    </ligand>
</feature>
<feature type="binding site" evidence="1">
    <location>
        <position position="114"/>
    </location>
    <ligand>
        <name>[4Fe-4S] cluster</name>
        <dbReference type="ChEBI" id="CHEBI:49883"/>
        <label>1</label>
    </ligand>
</feature>
<geneLocation type="chloroplast"/>
<sequence>MFLMVTGFMNYSQQTVRAARYIGQSFMITLSHANRLPVTIQYPYEKLITSERFRGRIHFEFDKCIACEVCVRVCPIDLPVVDWKLETNIRKKRLLNYSIDFGICIFCGNCIEYCPTNCLSMTEEYELSAYDRHELNYNQIALGRLPMSVIDDYTIRTIQIK</sequence>
<reference key="1">
    <citation type="journal article" date="2000" name="DNA Res.">
        <title>Complete structure of the chloroplast genome of a legume, Lotus japonicus.</title>
        <authorList>
            <person name="Kato T."/>
            <person name="Kaneko T."/>
            <person name="Sato S."/>
            <person name="Nakamura Y."/>
            <person name="Tabata S."/>
        </authorList>
    </citation>
    <scope>NUCLEOTIDE SEQUENCE [LARGE SCALE GENOMIC DNA]</scope>
    <source>
        <strain>cv. Miyakojima MG-20</strain>
    </source>
</reference>
<dbReference type="EC" id="7.1.1.-" evidence="1"/>
<dbReference type="EMBL" id="AP002983">
    <property type="protein sequence ID" value="BAB33249.1"/>
    <property type="molecule type" value="Genomic_DNA"/>
</dbReference>
<dbReference type="RefSeq" id="NP_084849.1">
    <property type="nucleotide sequence ID" value="NC_002694.1"/>
</dbReference>
<dbReference type="SMR" id="Q9BBP0"/>
<dbReference type="GeneID" id="802943"/>
<dbReference type="GO" id="GO:0009535">
    <property type="term" value="C:chloroplast thylakoid membrane"/>
    <property type="evidence" value="ECO:0007669"/>
    <property type="project" value="UniProtKB-SubCell"/>
</dbReference>
<dbReference type="GO" id="GO:0051539">
    <property type="term" value="F:4 iron, 4 sulfur cluster binding"/>
    <property type="evidence" value="ECO:0007669"/>
    <property type="project" value="UniProtKB-KW"/>
</dbReference>
<dbReference type="GO" id="GO:0005506">
    <property type="term" value="F:iron ion binding"/>
    <property type="evidence" value="ECO:0007669"/>
    <property type="project" value="UniProtKB-UniRule"/>
</dbReference>
<dbReference type="GO" id="GO:0008137">
    <property type="term" value="F:NADH dehydrogenase (ubiquinone) activity"/>
    <property type="evidence" value="ECO:0007669"/>
    <property type="project" value="InterPro"/>
</dbReference>
<dbReference type="GO" id="GO:0048038">
    <property type="term" value="F:quinone binding"/>
    <property type="evidence" value="ECO:0007669"/>
    <property type="project" value="UniProtKB-KW"/>
</dbReference>
<dbReference type="GO" id="GO:0019684">
    <property type="term" value="P:photosynthesis, light reaction"/>
    <property type="evidence" value="ECO:0007669"/>
    <property type="project" value="UniProtKB-UniRule"/>
</dbReference>
<dbReference type="FunFam" id="3.30.70.3270:FF:000006">
    <property type="entry name" value="NAD(P)H-quinone oxidoreductase subunit I, chloroplastic"/>
    <property type="match status" value="1"/>
</dbReference>
<dbReference type="Gene3D" id="3.30.70.3270">
    <property type="match status" value="1"/>
</dbReference>
<dbReference type="HAMAP" id="MF_01351">
    <property type="entry name" value="NDH1_NuoI"/>
    <property type="match status" value="1"/>
</dbReference>
<dbReference type="InterPro" id="IPR017896">
    <property type="entry name" value="4Fe4S_Fe-S-bd"/>
</dbReference>
<dbReference type="InterPro" id="IPR017900">
    <property type="entry name" value="4Fe4S_Fe_S_CS"/>
</dbReference>
<dbReference type="InterPro" id="IPR010226">
    <property type="entry name" value="NADH_quinone_OxRdtase_chainI"/>
</dbReference>
<dbReference type="InterPro" id="IPR004497">
    <property type="entry name" value="NDHI"/>
</dbReference>
<dbReference type="NCBIfam" id="TIGR00403">
    <property type="entry name" value="ndhI"/>
    <property type="match status" value="1"/>
</dbReference>
<dbReference type="NCBIfam" id="TIGR01971">
    <property type="entry name" value="NuoI"/>
    <property type="match status" value="1"/>
</dbReference>
<dbReference type="NCBIfam" id="NF004537">
    <property type="entry name" value="PRK05888.1-3"/>
    <property type="match status" value="1"/>
</dbReference>
<dbReference type="PANTHER" id="PTHR47275">
    <property type="entry name" value="NAD(P)H-QUINONE OXIDOREDUCTASE SUBUNIT I, CHLOROPLASTIC"/>
    <property type="match status" value="1"/>
</dbReference>
<dbReference type="PANTHER" id="PTHR47275:SF1">
    <property type="entry name" value="NAD(P)H-QUINONE OXIDOREDUCTASE SUBUNIT I, CHLOROPLASTIC"/>
    <property type="match status" value="1"/>
</dbReference>
<dbReference type="Pfam" id="PF12838">
    <property type="entry name" value="Fer4_7"/>
    <property type="match status" value="1"/>
</dbReference>
<dbReference type="SUPFAM" id="SSF54862">
    <property type="entry name" value="4Fe-4S ferredoxins"/>
    <property type="match status" value="1"/>
</dbReference>
<dbReference type="PROSITE" id="PS00198">
    <property type="entry name" value="4FE4S_FER_1"/>
    <property type="match status" value="2"/>
</dbReference>
<dbReference type="PROSITE" id="PS51379">
    <property type="entry name" value="4FE4S_FER_2"/>
    <property type="match status" value="2"/>
</dbReference>
<keyword id="KW-0004">4Fe-4S</keyword>
<keyword id="KW-0150">Chloroplast</keyword>
<keyword id="KW-0408">Iron</keyword>
<keyword id="KW-0411">Iron-sulfur</keyword>
<keyword id="KW-0472">Membrane</keyword>
<keyword id="KW-0479">Metal-binding</keyword>
<keyword id="KW-0520">NAD</keyword>
<keyword id="KW-0521">NADP</keyword>
<keyword id="KW-0934">Plastid</keyword>
<keyword id="KW-0618">Plastoquinone</keyword>
<keyword id="KW-0874">Quinone</keyword>
<keyword id="KW-0677">Repeat</keyword>
<keyword id="KW-0793">Thylakoid</keyword>
<keyword id="KW-1278">Translocase</keyword>
<organism>
    <name type="scientific">Lotus japonicus</name>
    <name type="common">Lotus corniculatus var. japonicus</name>
    <dbReference type="NCBI Taxonomy" id="34305"/>
    <lineage>
        <taxon>Eukaryota</taxon>
        <taxon>Viridiplantae</taxon>
        <taxon>Streptophyta</taxon>
        <taxon>Embryophyta</taxon>
        <taxon>Tracheophyta</taxon>
        <taxon>Spermatophyta</taxon>
        <taxon>Magnoliopsida</taxon>
        <taxon>eudicotyledons</taxon>
        <taxon>Gunneridae</taxon>
        <taxon>Pentapetalae</taxon>
        <taxon>rosids</taxon>
        <taxon>fabids</taxon>
        <taxon>Fabales</taxon>
        <taxon>Fabaceae</taxon>
        <taxon>Papilionoideae</taxon>
        <taxon>50 kb inversion clade</taxon>
        <taxon>NPAAA clade</taxon>
        <taxon>Hologalegina</taxon>
        <taxon>robinioid clade</taxon>
        <taxon>Loteae</taxon>
        <taxon>Lotus</taxon>
    </lineage>
</organism>
<proteinExistence type="inferred from homology"/>
<evidence type="ECO:0000255" key="1">
    <source>
        <dbReference type="HAMAP-Rule" id="MF_01351"/>
    </source>
</evidence>
<gene>
    <name evidence="1" type="primary">ndhI</name>
</gene>